<name>TFB2_YEAST</name>
<evidence type="ECO:0000250" key="1"/>
<evidence type="ECO:0000256" key="2">
    <source>
        <dbReference type="SAM" id="MobiDB-lite"/>
    </source>
</evidence>
<evidence type="ECO:0000269" key="3">
    <source>
    </source>
</evidence>
<evidence type="ECO:0000269" key="4">
    <source>
    </source>
</evidence>
<evidence type="ECO:0000269" key="5">
    <source>
    </source>
</evidence>
<evidence type="ECO:0000269" key="6">
    <source>
    </source>
</evidence>
<evidence type="ECO:0000269" key="7">
    <source>
    </source>
</evidence>
<evidence type="ECO:0000269" key="8">
    <source>
    </source>
</evidence>
<evidence type="ECO:0000269" key="9">
    <source>
    </source>
</evidence>
<evidence type="ECO:0000305" key="10"/>
<evidence type="ECO:0007829" key="11">
    <source>
        <dbReference type="PDB" id="3DGP"/>
    </source>
</evidence>
<evidence type="ECO:0007829" key="12">
    <source>
        <dbReference type="PDB" id="7ML2"/>
    </source>
</evidence>
<evidence type="ECO:0007829" key="13">
    <source>
        <dbReference type="PDB" id="7ML4"/>
    </source>
</evidence>
<evidence type="ECO:0007829" key="14">
    <source>
        <dbReference type="PDB" id="7O4J"/>
    </source>
</evidence>
<evidence type="ECO:0007829" key="15">
    <source>
        <dbReference type="PDB" id="7ZS9"/>
    </source>
</evidence>
<protein>
    <recommendedName>
        <fullName>General transcription and DNA repair factor IIH subunit TFB2</fullName>
        <shortName>TFIIH subunit TFB2</shortName>
    </recommendedName>
    <alternativeName>
        <fullName>RNA polymerase II transcription factor B 52 kDa subunit</fullName>
    </alternativeName>
    <alternativeName>
        <fullName>RNA polymerase II transcription factor B p52 subunit</fullName>
    </alternativeName>
    <alternativeName>
        <fullName>RNA polymerase II transcription factor B subunit 2</fullName>
    </alternativeName>
</protein>
<sequence length="513" mass="58535">MSDYSLKHSVTQYLEEIPQQVQNRLYTSPATCLAIYRILPPLAKFFIMAMVFNENEVPLLDLDKWVNSNGKLQFQNAIKSMKSLHLLIPNKSSGTLMINLNPTFKISLRNALTGGEVQNSFGVVVEENVVSLDLLDEYSANKWETILHFMVGTPLAKIPSEKVLNLLKHSKLMEEVNSTGEFKITNEGFQFLLQEINSQLWTLLLQYLKMIETSKMDLVDVLHFIFMLGALEVGKAYKIDALSETQRIMLQDMRDYGLVFQKHSNDSIFYPTKLALMLTSDTKTIRSASNAMDSVLRQNREEPSVNEDGANGKSTTDITTSDDLNKAGLKNQDIPDGSLIVETNFKIYSYSNSPLQIAVLSLFVHLKARFVNMVLGQITRESIRRALTNGITADQIIAYLETHAHPQMRRLAEEKLEKKLELDPNCKEPLQVLPPTVVDQIRLWQLELDRVITYEGSLYSDFETSQEYNLLSKYAQDIGVLLWKDDKKKKFFISKEGNSQVLDFAKRKLKKKQ</sequence>
<dbReference type="EMBL" id="U62804">
    <property type="protein sequence ID" value="AAB40628.1"/>
    <property type="molecule type" value="Genomic_DNA"/>
</dbReference>
<dbReference type="EMBL" id="U43503">
    <property type="protein sequence ID" value="AAB68240.1"/>
    <property type="molecule type" value="Genomic_DNA"/>
</dbReference>
<dbReference type="EMBL" id="BK006949">
    <property type="protein sequence ID" value="DAA11311.1"/>
    <property type="molecule type" value="Genomic_DNA"/>
</dbReference>
<dbReference type="PIR" id="S62000">
    <property type="entry name" value="S62000"/>
</dbReference>
<dbReference type="RefSeq" id="NP_015203.1">
    <property type="nucleotide sequence ID" value="NM_001183936.1"/>
</dbReference>
<dbReference type="PDB" id="3DGP">
    <property type="method" value="X-ray"/>
    <property type="resolution" value="1.80 A"/>
    <property type="chains" value="A=435-513"/>
</dbReference>
<dbReference type="PDB" id="3DOM">
    <property type="method" value="X-ray"/>
    <property type="resolution" value="2.60 A"/>
    <property type="chains" value="A/C=412-513"/>
</dbReference>
<dbReference type="PDB" id="5FMF">
    <property type="method" value="EM"/>
    <property type="resolution" value="6.00 A"/>
    <property type="chains" value="W=447-508"/>
</dbReference>
<dbReference type="PDB" id="5OQJ">
    <property type="method" value="EM"/>
    <property type="resolution" value="4.70 A"/>
    <property type="chains" value="2=1-513"/>
</dbReference>
<dbReference type="PDB" id="5OQM">
    <property type="method" value="EM"/>
    <property type="resolution" value="5.80 A"/>
    <property type="chains" value="2=1-513"/>
</dbReference>
<dbReference type="PDB" id="5SVA">
    <property type="method" value="EM"/>
    <property type="resolution" value="15.30 A"/>
    <property type="chains" value="a=1-513"/>
</dbReference>
<dbReference type="PDB" id="6GYM">
    <property type="method" value="EM"/>
    <property type="resolution" value="6.70 A"/>
    <property type="chains" value="2=1-513"/>
</dbReference>
<dbReference type="PDB" id="7K01">
    <property type="method" value="EM"/>
    <property type="resolution" value="3.90 A"/>
    <property type="chains" value="2=1-513"/>
</dbReference>
<dbReference type="PDB" id="7K04">
    <property type="method" value="EM"/>
    <property type="resolution" value="9.25 A"/>
    <property type="chains" value="2=1-513"/>
</dbReference>
<dbReference type="PDB" id="7M2U">
    <property type="method" value="EM"/>
    <property type="resolution" value="8.20 A"/>
    <property type="chains" value="2=1-513"/>
</dbReference>
<dbReference type="PDB" id="7ML0">
    <property type="method" value="EM"/>
    <property type="resolution" value="3.00 A"/>
    <property type="chains" value="2=1-513"/>
</dbReference>
<dbReference type="PDB" id="7ML1">
    <property type="method" value="EM"/>
    <property type="resolution" value="4.00 A"/>
    <property type="chains" value="2=1-513"/>
</dbReference>
<dbReference type="PDB" id="7ML2">
    <property type="method" value="EM"/>
    <property type="resolution" value="3.40 A"/>
    <property type="chains" value="2=1-513"/>
</dbReference>
<dbReference type="PDB" id="7ML3">
    <property type="method" value="EM"/>
    <property type="resolution" value="7.60 A"/>
    <property type="chains" value="2=1-513"/>
</dbReference>
<dbReference type="PDB" id="7ML4">
    <property type="method" value="EM"/>
    <property type="resolution" value="3.10 A"/>
    <property type="chains" value="2=1-513"/>
</dbReference>
<dbReference type="PDB" id="7O4I">
    <property type="method" value="EM"/>
    <property type="resolution" value="3.20 A"/>
    <property type="chains" value="2=1-513"/>
</dbReference>
<dbReference type="PDB" id="7O4J">
    <property type="method" value="EM"/>
    <property type="resolution" value="2.90 A"/>
    <property type="chains" value="2=1-513"/>
</dbReference>
<dbReference type="PDB" id="7O4K">
    <property type="method" value="EM"/>
    <property type="resolution" value="3.60 A"/>
    <property type="chains" value="2=1-513"/>
</dbReference>
<dbReference type="PDB" id="7O4L">
    <property type="method" value="EM"/>
    <property type="resolution" value="3.40 A"/>
    <property type="chains" value="2=1-513"/>
</dbReference>
<dbReference type="PDB" id="7O72">
    <property type="method" value="EM"/>
    <property type="resolution" value="3.40 A"/>
    <property type="chains" value="2=1-513"/>
</dbReference>
<dbReference type="PDB" id="7O73">
    <property type="method" value="EM"/>
    <property type="resolution" value="3.40 A"/>
    <property type="chains" value="2=1-513"/>
</dbReference>
<dbReference type="PDB" id="7O75">
    <property type="method" value="EM"/>
    <property type="resolution" value="3.20 A"/>
    <property type="chains" value="2=1-513"/>
</dbReference>
<dbReference type="PDB" id="7ZS9">
    <property type="method" value="EM"/>
    <property type="resolution" value="3.10 A"/>
    <property type="chains" value="2=1-513"/>
</dbReference>
<dbReference type="PDB" id="7ZSA">
    <property type="method" value="EM"/>
    <property type="resolution" value="4.00 A"/>
    <property type="chains" value="2=1-513"/>
</dbReference>
<dbReference type="PDB" id="7ZSB">
    <property type="method" value="EM"/>
    <property type="resolution" value="6.60 A"/>
    <property type="chains" value="2=1-513"/>
</dbReference>
<dbReference type="PDB" id="8CEN">
    <property type="method" value="EM"/>
    <property type="resolution" value="3.00 A"/>
    <property type="chains" value="2=1-513"/>
</dbReference>
<dbReference type="PDB" id="8CEO">
    <property type="method" value="EM"/>
    <property type="resolution" value="3.60 A"/>
    <property type="chains" value="2=1-513"/>
</dbReference>
<dbReference type="PDB" id="8UMH">
    <property type="method" value="EM"/>
    <property type="resolution" value="4.10 A"/>
    <property type="chains" value="2=1-513"/>
</dbReference>
<dbReference type="PDB" id="8UMI">
    <property type="method" value="EM"/>
    <property type="resolution" value="3.70 A"/>
    <property type="chains" value="2=1-513"/>
</dbReference>
<dbReference type="PDB" id="8UOQ">
    <property type="method" value="EM"/>
    <property type="resolution" value="3.80 A"/>
    <property type="chains" value="2=1-513"/>
</dbReference>
<dbReference type="PDB" id="8UOT">
    <property type="method" value="EM"/>
    <property type="resolution" value="3.70 A"/>
    <property type="chains" value="2=1-513"/>
</dbReference>
<dbReference type="PDBsum" id="3DGP"/>
<dbReference type="PDBsum" id="3DOM"/>
<dbReference type="PDBsum" id="5FMF"/>
<dbReference type="PDBsum" id="5OQJ"/>
<dbReference type="PDBsum" id="5OQM"/>
<dbReference type="PDBsum" id="5SVA"/>
<dbReference type="PDBsum" id="6GYM"/>
<dbReference type="PDBsum" id="7K01"/>
<dbReference type="PDBsum" id="7K04"/>
<dbReference type="PDBsum" id="7M2U"/>
<dbReference type="PDBsum" id="7ML0"/>
<dbReference type="PDBsum" id="7ML1"/>
<dbReference type="PDBsum" id="7ML2"/>
<dbReference type="PDBsum" id="7ML3"/>
<dbReference type="PDBsum" id="7ML4"/>
<dbReference type="PDBsum" id="7O4I"/>
<dbReference type="PDBsum" id="7O4J"/>
<dbReference type="PDBsum" id="7O4K"/>
<dbReference type="PDBsum" id="7O4L"/>
<dbReference type="PDBsum" id="7O72"/>
<dbReference type="PDBsum" id="7O73"/>
<dbReference type="PDBsum" id="7O75"/>
<dbReference type="PDBsum" id="7ZS9"/>
<dbReference type="PDBsum" id="7ZSA"/>
<dbReference type="PDBsum" id="7ZSB"/>
<dbReference type="PDBsum" id="8CEN"/>
<dbReference type="PDBsum" id="8CEO"/>
<dbReference type="PDBsum" id="8UMH"/>
<dbReference type="PDBsum" id="8UMI"/>
<dbReference type="PDBsum" id="8UOQ"/>
<dbReference type="PDBsum" id="8UOT"/>
<dbReference type="EMDB" id="EMD-0092"/>
<dbReference type="EMDB" id="EMD-12719"/>
<dbReference type="EMDB" id="EMD-12720"/>
<dbReference type="EMDB" id="EMD-12721"/>
<dbReference type="EMDB" id="EMD-12722"/>
<dbReference type="EMDB" id="EMD-12743"/>
<dbReference type="EMDB" id="EMD-12744"/>
<dbReference type="EMDB" id="EMD-12745"/>
<dbReference type="EMDB" id="EMD-14927"/>
<dbReference type="EMDB" id="EMD-14928"/>
<dbReference type="EMDB" id="EMD-14929"/>
<dbReference type="EMDB" id="EMD-22587"/>
<dbReference type="EMDB" id="EMD-22588"/>
<dbReference type="EMDB" id="EMD-3846"/>
<dbReference type="EMDB" id="EMD-3850"/>
<dbReference type="EMDB" id="EMD-42437"/>
<dbReference type="EMDB" id="EMD-42438"/>
<dbReference type="SMR" id="Q02939"/>
<dbReference type="BioGRID" id="36059">
    <property type="interactions" value="175"/>
</dbReference>
<dbReference type="ComplexPortal" id="CPX-1659">
    <property type="entry name" value="General transcription factor TFIIH complex"/>
</dbReference>
<dbReference type="DIP" id="DIP-5783N"/>
<dbReference type="FunCoup" id="Q02939">
    <property type="interactions" value="601"/>
</dbReference>
<dbReference type="IntAct" id="Q02939">
    <property type="interactions" value="19"/>
</dbReference>
<dbReference type="MINT" id="Q02939"/>
<dbReference type="STRING" id="4932.YPL122C"/>
<dbReference type="iPTMnet" id="Q02939"/>
<dbReference type="PaxDb" id="4932-YPL122C"/>
<dbReference type="PeptideAtlas" id="Q02939"/>
<dbReference type="EnsemblFungi" id="YPL122C_mRNA">
    <property type="protein sequence ID" value="YPL122C"/>
    <property type="gene ID" value="YPL122C"/>
</dbReference>
<dbReference type="GeneID" id="855981"/>
<dbReference type="KEGG" id="sce:YPL122C"/>
<dbReference type="AGR" id="SGD:S000006043"/>
<dbReference type="SGD" id="S000006043">
    <property type="gene designation" value="TFB2"/>
</dbReference>
<dbReference type="VEuPathDB" id="FungiDB:YPL122C"/>
<dbReference type="eggNOG" id="KOG3471">
    <property type="taxonomic scope" value="Eukaryota"/>
</dbReference>
<dbReference type="GeneTree" id="ENSGT00390000014159"/>
<dbReference type="HOGENOM" id="CLU_027280_4_0_1"/>
<dbReference type="InParanoid" id="Q02939"/>
<dbReference type="OMA" id="KGFIIIE"/>
<dbReference type="OrthoDB" id="364513at2759"/>
<dbReference type="BioCyc" id="YEAST:G3O-34021-MONOMER"/>
<dbReference type="Reactome" id="R-SCE-113418">
    <property type="pathway name" value="Formation of the Early Elongation Complex"/>
</dbReference>
<dbReference type="Reactome" id="R-SCE-674695">
    <property type="pathway name" value="RNA Polymerase II Pre-transcription Events"/>
</dbReference>
<dbReference type="Reactome" id="R-SCE-6781823">
    <property type="pathway name" value="Formation of TC-NER Pre-Incision Complex"/>
</dbReference>
<dbReference type="Reactome" id="R-SCE-6782135">
    <property type="pathway name" value="Dual incision in TC-NER"/>
</dbReference>
<dbReference type="Reactome" id="R-SCE-6782210">
    <property type="pathway name" value="Gap-filling DNA repair synthesis and ligation in TC-NER"/>
</dbReference>
<dbReference type="Reactome" id="R-SCE-6796648">
    <property type="pathway name" value="TP53 Regulates Transcription of DNA Repair Genes"/>
</dbReference>
<dbReference type="Reactome" id="R-SCE-72086">
    <property type="pathway name" value="mRNA Capping"/>
</dbReference>
<dbReference type="Reactome" id="R-SCE-73772">
    <property type="pathway name" value="RNA Polymerase I Promoter Escape"/>
</dbReference>
<dbReference type="Reactome" id="R-SCE-73776">
    <property type="pathway name" value="RNA Polymerase II Promoter Escape"/>
</dbReference>
<dbReference type="Reactome" id="R-SCE-73779">
    <property type="pathway name" value="RNA Polymerase II Transcription Pre-Initiation And Promoter Opening"/>
</dbReference>
<dbReference type="Reactome" id="R-SCE-75953">
    <property type="pathway name" value="RNA Polymerase II Transcription Initiation"/>
</dbReference>
<dbReference type="Reactome" id="R-SCE-76042">
    <property type="pathway name" value="RNA Polymerase II Transcription Initiation And Promoter Clearance"/>
</dbReference>
<dbReference type="Reactome" id="R-SCE-77075">
    <property type="pathway name" value="RNA Pol II CTD phosphorylation and interaction with CE"/>
</dbReference>
<dbReference type="BioGRID-ORCS" id="855981">
    <property type="hits" value="1 hit in 10 CRISPR screens"/>
</dbReference>
<dbReference type="EvolutionaryTrace" id="Q02939"/>
<dbReference type="PRO" id="PR:Q02939"/>
<dbReference type="Proteomes" id="UP000002311">
    <property type="component" value="Chromosome XVI"/>
</dbReference>
<dbReference type="RNAct" id="Q02939">
    <property type="molecule type" value="protein"/>
</dbReference>
<dbReference type="GO" id="GO:0000112">
    <property type="term" value="C:nucleotide-excision repair factor 3 complex"/>
    <property type="evidence" value="ECO:0000353"/>
    <property type="project" value="SGD"/>
</dbReference>
<dbReference type="GO" id="GO:0000439">
    <property type="term" value="C:transcription factor TFIIH core complex"/>
    <property type="evidence" value="ECO:0000314"/>
    <property type="project" value="SGD"/>
</dbReference>
<dbReference type="GO" id="GO:0005675">
    <property type="term" value="C:transcription factor TFIIH holo complex"/>
    <property type="evidence" value="ECO:0000314"/>
    <property type="project" value="SGD"/>
</dbReference>
<dbReference type="GO" id="GO:0001671">
    <property type="term" value="F:ATPase activator activity"/>
    <property type="evidence" value="ECO:0007669"/>
    <property type="project" value="InterPro"/>
</dbReference>
<dbReference type="GO" id="GO:0003690">
    <property type="term" value="F:double-stranded DNA binding"/>
    <property type="evidence" value="ECO:0000314"/>
    <property type="project" value="SGD"/>
</dbReference>
<dbReference type="GO" id="GO:0006289">
    <property type="term" value="P:nucleotide-excision repair"/>
    <property type="evidence" value="ECO:0000314"/>
    <property type="project" value="ComplexPortal"/>
</dbReference>
<dbReference type="GO" id="GO:0006366">
    <property type="term" value="P:transcription by RNA polymerase II"/>
    <property type="evidence" value="ECO:0000314"/>
    <property type="project" value="SGD"/>
</dbReference>
<dbReference type="GO" id="GO:0006367">
    <property type="term" value="P:transcription initiation at RNA polymerase II promoter"/>
    <property type="evidence" value="ECO:0000314"/>
    <property type="project" value="ComplexPortal"/>
</dbReference>
<dbReference type="FunFam" id="3.30.70.2610:FF:000001">
    <property type="entry name" value="General transcription factor IIH subunit 4"/>
    <property type="match status" value="1"/>
</dbReference>
<dbReference type="Gene3D" id="3.30.70.2610">
    <property type="match status" value="1"/>
</dbReference>
<dbReference type="InterPro" id="IPR040662">
    <property type="entry name" value="Tfb2_C"/>
</dbReference>
<dbReference type="InterPro" id="IPR004598">
    <property type="entry name" value="TFIIH_p52/Tfb2"/>
</dbReference>
<dbReference type="NCBIfam" id="TIGR00625">
    <property type="entry name" value="tfb2"/>
    <property type="match status" value="1"/>
</dbReference>
<dbReference type="PANTHER" id="PTHR13152:SF0">
    <property type="entry name" value="GENERAL TRANSCRIPTION FACTOR IIH SUBUNIT 4"/>
    <property type="match status" value="1"/>
</dbReference>
<dbReference type="PANTHER" id="PTHR13152">
    <property type="entry name" value="TFIIH, POLYPEPTIDE 4"/>
    <property type="match status" value="1"/>
</dbReference>
<dbReference type="Pfam" id="PF03849">
    <property type="entry name" value="Tfb2"/>
    <property type="match status" value="1"/>
</dbReference>
<dbReference type="Pfam" id="PF18307">
    <property type="entry name" value="Tfb2_C"/>
    <property type="match status" value="1"/>
</dbReference>
<comment type="function">
    <text evidence="7 8 9">Component of the general transcription and DNA repair factor IIH (TFIIH) core complex, which is involved in general and transcription-coupled nucleotide excision repair (NER) of damaged DNA and, when complexed to TFIIK, in RNA transcription by RNA polymerase II. In NER, TFIIH acts by opening DNA around the lesion to allow the excision of the damaged oligonucleotide and its replacement by a new DNA fragment. In transcription, TFIIH has an essential role in transcription initiation. When the pre-initiation complex (PIC) has been established, TFIIH is required for promoter opening and promoter escape. Phosphorylation of the C-terminal tail (CTD) of the largest subunit of RNA polymerase II by the kinase module TFIIK controls the initiation of transcription.</text>
</comment>
<comment type="subunit">
    <text evidence="3 5 6 7 9">Component of the 7-subunit TFIIH core complex composed of XPB/SSL2, XPD/RAD3, SSL1, TFB1, TFB2, TFB4 and TFB5, which is active in NER. The core complex associates with the 3-subunit CTD-kinase module TFIIK composed of CCL1, KIN28 and TFB3 to form the 10-subunit holoenzyme (holo-TFIIH) active in transcription (PubMed:14500720, PubMed:7961739, PubMed:9235928). An additionnal subunit, TFB6, plays a role in the dissociation of the SSL2 helicase from TFIIH after transcription initiation (PubMed:22411836). Interacts with TFB5 (PubMed:19172752).</text>
</comment>
<comment type="interaction">
    <interactant intactId="EBI-2345544">
        <id>Q02939</id>
    </interactant>
    <interactant intactId="EBI-2095127">
        <id>Q3E7C1</id>
        <label>TFB5</label>
    </interactant>
    <organismsDiffer>false</organismsDiffer>
    <experiments>7</experiments>
</comment>
<comment type="subcellular location">
    <subcellularLocation>
        <location evidence="1">Nucleus</location>
    </subcellularLocation>
</comment>
<comment type="miscellaneous">
    <text evidence="4">Present with 8900 molecules/cell in log phase SD medium.</text>
</comment>
<comment type="similarity">
    <text evidence="10">Belongs to the TFB2 family.</text>
</comment>
<gene>
    <name type="primary">TFB2</name>
    <name type="ordered locus">YPL122C</name>
</gene>
<proteinExistence type="evidence at protein level"/>
<accession>Q02939</accession>
<accession>D6W3P5</accession>
<accession>P87331</accession>
<feature type="chain" id="PRO_0000119268" description="General transcription and DNA repair factor IIH subunit TFB2">
    <location>
        <begin position="1"/>
        <end position="513"/>
    </location>
</feature>
<feature type="region of interest" description="Disordered" evidence="2">
    <location>
        <begin position="296"/>
        <end position="319"/>
    </location>
</feature>
<feature type="helix" evidence="14">
    <location>
        <begin position="6"/>
        <end position="16"/>
    </location>
</feature>
<feature type="helix" evidence="14">
    <location>
        <begin position="19"/>
        <end position="25"/>
    </location>
</feature>
<feature type="helix" evidence="14">
    <location>
        <begin position="29"/>
        <end position="38"/>
    </location>
</feature>
<feature type="helix" evidence="14">
    <location>
        <begin position="41"/>
        <end position="51"/>
    </location>
</feature>
<feature type="helix" evidence="14">
    <location>
        <begin position="59"/>
        <end position="65"/>
    </location>
</feature>
<feature type="strand" evidence="12">
    <location>
        <begin position="68"/>
        <end position="70"/>
    </location>
</feature>
<feature type="helix" evidence="14">
    <location>
        <begin position="71"/>
        <end position="83"/>
    </location>
</feature>
<feature type="strand" evidence="14">
    <location>
        <begin position="87"/>
        <end position="92"/>
    </location>
</feature>
<feature type="strand" evidence="14">
    <location>
        <begin position="95"/>
        <end position="100"/>
    </location>
</feature>
<feature type="helix" evidence="14">
    <location>
        <begin position="102"/>
        <end position="113"/>
    </location>
</feature>
<feature type="turn" evidence="14">
    <location>
        <begin position="118"/>
        <end position="121"/>
    </location>
</feature>
<feature type="turn" evidence="14">
    <location>
        <begin position="131"/>
        <end position="134"/>
    </location>
</feature>
<feature type="helix" evidence="14">
    <location>
        <begin position="135"/>
        <end position="151"/>
    </location>
</feature>
<feature type="helix" evidence="14">
    <location>
        <begin position="161"/>
        <end position="169"/>
    </location>
</feature>
<feature type="strand" evidence="14">
    <location>
        <begin position="170"/>
        <end position="176"/>
    </location>
</feature>
<feature type="turn" evidence="14">
    <location>
        <begin position="177"/>
        <end position="180"/>
    </location>
</feature>
<feature type="strand" evidence="14">
    <location>
        <begin position="181"/>
        <end position="183"/>
    </location>
</feature>
<feature type="helix" evidence="14">
    <location>
        <begin position="186"/>
        <end position="192"/>
    </location>
</feature>
<feature type="helix" evidence="14">
    <location>
        <begin position="196"/>
        <end position="210"/>
    </location>
</feature>
<feature type="strand" evidence="13">
    <location>
        <begin position="211"/>
        <end position="215"/>
    </location>
</feature>
<feature type="helix" evidence="14">
    <location>
        <begin position="218"/>
        <end position="230"/>
    </location>
</feature>
<feature type="strand" evidence="14">
    <location>
        <begin position="233"/>
        <end position="235"/>
    </location>
</feature>
<feature type="strand" evidence="15">
    <location>
        <begin position="237"/>
        <end position="239"/>
    </location>
</feature>
<feature type="helix" evidence="14">
    <location>
        <begin position="245"/>
        <end position="254"/>
    </location>
</feature>
<feature type="turn" evidence="14">
    <location>
        <begin position="255"/>
        <end position="257"/>
    </location>
</feature>
<feature type="strand" evidence="14">
    <location>
        <begin position="258"/>
        <end position="261"/>
    </location>
</feature>
<feature type="helix" evidence="13">
    <location>
        <begin position="263"/>
        <end position="265"/>
    </location>
</feature>
<feature type="strand" evidence="14">
    <location>
        <begin position="268"/>
        <end position="271"/>
    </location>
</feature>
<feature type="helix" evidence="14">
    <location>
        <begin position="273"/>
        <end position="276"/>
    </location>
</feature>
<feature type="turn" evidence="14">
    <location>
        <begin position="277"/>
        <end position="279"/>
    </location>
</feature>
<feature type="strand" evidence="14">
    <location>
        <begin position="339"/>
        <end position="341"/>
    </location>
</feature>
<feature type="strand" evidence="14">
    <location>
        <begin position="345"/>
        <end position="349"/>
    </location>
</feature>
<feature type="helix" evidence="14">
    <location>
        <begin position="354"/>
        <end position="360"/>
    </location>
</feature>
<feature type="turn" evidence="15">
    <location>
        <begin position="361"/>
        <end position="363"/>
    </location>
</feature>
<feature type="strand" evidence="14">
    <location>
        <begin position="365"/>
        <end position="369"/>
    </location>
</feature>
<feature type="strand" evidence="14">
    <location>
        <begin position="374"/>
        <end position="377"/>
    </location>
</feature>
<feature type="helix" evidence="14">
    <location>
        <begin position="380"/>
        <end position="388"/>
    </location>
</feature>
<feature type="helix" evidence="14">
    <location>
        <begin position="393"/>
        <end position="402"/>
    </location>
</feature>
<feature type="helix" evidence="14">
    <location>
        <begin position="406"/>
        <end position="422"/>
    </location>
</feature>
<feature type="turn" evidence="13">
    <location>
        <begin position="423"/>
        <end position="425"/>
    </location>
</feature>
<feature type="strand" evidence="12">
    <location>
        <begin position="426"/>
        <end position="428"/>
    </location>
</feature>
<feature type="strand" evidence="12">
    <location>
        <begin position="431"/>
        <end position="433"/>
    </location>
</feature>
<feature type="helix" evidence="12">
    <location>
        <begin position="435"/>
        <end position="447"/>
    </location>
</feature>
<feature type="helix" evidence="11">
    <location>
        <begin position="448"/>
        <end position="450"/>
    </location>
</feature>
<feature type="strand" evidence="11">
    <location>
        <begin position="452"/>
        <end position="460"/>
    </location>
</feature>
<feature type="helix" evidence="11">
    <location>
        <begin position="465"/>
        <end position="477"/>
    </location>
</feature>
<feature type="strand" evidence="11">
    <location>
        <begin position="481"/>
        <end position="485"/>
    </location>
</feature>
<feature type="turn" evidence="11">
    <location>
        <begin position="486"/>
        <end position="489"/>
    </location>
</feature>
<feature type="strand" evidence="11">
    <location>
        <begin position="490"/>
        <end position="494"/>
    </location>
</feature>
<feature type="helix" evidence="11">
    <location>
        <begin position="495"/>
        <end position="497"/>
    </location>
</feature>
<feature type="helix" evidence="11">
    <location>
        <begin position="498"/>
        <end position="505"/>
    </location>
</feature>
<reference key="1">
    <citation type="journal article" date="1997" name="J. Biol. Chem.">
        <title>Genes for Tfb2, Tfb3, and Tfb4 subunits of yeast transcription/repair factor IIH. Homology to human cyclin-dependent kinase activating kinase and IIH subunits.</title>
        <authorList>
            <person name="Feaver W.J."/>
            <person name="Henry N.L."/>
            <person name="Wang Z."/>
            <person name="Wu X."/>
            <person name="Svejstrup J.Q."/>
            <person name="Bushnell D.A."/>
            <person name="Friedberg E.C."/>
            <person name="Kornberg R.D."/>
        </authorList>
    </citation>
    <scope>NUCLEOTIDE SEQUENCE [GENOMIC DNA]</scope>
    <scope>PROTEIN SEQUENCE OF 8-24 AND 110-138</scope>
    <scope>FUNCTION</scope>
    <scope>IDENTIFICATION IN THE TFIIH COMPLEX</scope>
    <source>
        <strain>DBY2019</strain>
    </source>
</reference>
<reference key="2">
    <citation type="journal article" date="1997" name="Nature">
        <title>The nucleotide sequence of Saccharomyces cerevisiae chromosome XVI.</title>
        <authorList>
            <person name="Bussey H."/>
            <person name="Storms R.K."/>
            <person name="Ahmed A."/>
            <person name="Albermann K."/>
            <person name="Allen E."/>
            <person name="Ansorge W."/>
            <person name="Araujo R."/>
            <person name="Aparicio A."/>
            <person name="Barrell B.G."/>
            <person name="Badcock K."/>
            <person name="Benes V."/>
            <person name="Botstein D."/>
            <person name="Bowman S."/>
            <person name="Brueckner M."/>
            <person name="Carpenter J."/>
            <person name="Cherry J.M."/>
            <person name="Chung E."/>
            <person name="Churcher C.M."/>
            <person name="Coster F."/>
            <person name="Davis K."/>
            <person name="Davis R.W."/>
            <person name="Dietrich F.S."/>
            <person name="Delius H."/>
            <person name="DiPaolo T."/>
            <person name="Dubois E."/>
            <person name="Duesterhoeft A."/>
            <person name="Duncan M."/>
            <person name="Floeth M."/>
            <person name="Fortin N."/>
            <person name="Friesen J.D."/>
            <person name="Fritz C."/>
            <person name="Goffeau A."/>
            <person name="Hall J."/>
            <person name="Hebling U."/>
            <person name="Heumann K."/>
            <person name="Hilbert H."/>
            <person name="Hillier L.W."/>
            <person name="Hunicke-Smith S."/>
            <person name="Hyman R.W."/>
            <person name="Johnston M."/>
            <person name="Kalman S."/>
            <person name="Kleine K."/>
            <person name="Komp C."/>
            <person name="Kurdi O."/>
            <person name="Lashkari D."/>
            <person name="Lew H."/>
            <person name="Lin A."/>
            <person name="Lin D."/>
            <person name="Louis E.J."/>
            <person name="Marathe R."/>
            <person name="Messenguy F."/>
            <person name="Mewes H.-W."/>
            <person name="Mirtipati S."/>
            <person name="Moestl D."/>
            <person name="Mueller-Auer S."/>
            <person name="Namath A."/>
            <person name="Nentwich U."/>
            <person name="Oefner P."/>
            <person name="Pearson D."/>
            <person name="Petel F.X."/>
            <person name="Pohl T.M."/>
            <person name="Purnelle B."/>
            <person name="Rajandream M.A."/>
            <person name="Rechmann S."/>
            <person name="Rieger M."/>
            <person name="Riles L."/>
            <person name="Roberts D."/>
            <person name="Schaefer M."/>
            <person name="Scharfe M."/>
            <person name="Scherens B."/>
            <person name="Schramm S."/>
            <person name="Schroeder M."/>
            <person name="Sdicu A.-M."/>
            <person name="Tettelin H."/>
            <person name="Urrestarazu L.A."/>
            <person name="Ushinsky S."/>
            <person name="Vierendeels F."/>
            <person name="Vissers S."/>
            <person name="Voss H."/>
            <person name="Walsh S.V."/>
            <person name="Wambutt R."/>
            <person name="Wang Y."/>
            <person name="Wedler E."/>
            <person name="Wedler H."/>
            <person name="Winnett E."/>
            <person name="Zhong W.-W."/>
            <person name="Zollner A."/>
            <person name="Vo D.H."/>
            <person name="Hani J."/>
        </authorList>
    </citation>
    <scope>NUCLEOTIDE SEQUENCE [LARGE SCALE GENOMIC DNA]</scope>
    <source>
        <strain>ATCC 204508 / S288c</strain>
    </source>
</reference>
<reference key="3">
    <citation type="journal article" date="2014" name="G3 (Bethesda)">
        <title>The reference genome sequence of Saccharomyces cerevisiae: Then and now.</title>
        <authorList>
            <person name="Engel S.R."/>
            <person name="Dietrich F.S."/>
            <person name="Fisk D.G."/>
            <person name="Binkley G."/>
            <person name="Balakrishnan R."/>
            <person name="Costanzo M.C."/>
            <person name="Dwight S.S."/>
            <person name="Hitz B.C."/>
            <person name="Karra K."/>
            <person name="Nash R.S."/>
            <person name="Weng S."/>
            <person name="Wong E.D."/>
            <person name="Lloyd P."/>
            <person name="Skrzypek M.S."/>
            <person name="Miyasato S.R."/>
            <person name="Simison M."/>
            <person name="Cherry J.M."/>
        </authorList>
    </citation>
    <scope>GENOME REANNOTATION</scope>
    <source>
        <strain>ATCC 204508 / S288c</strain>
    </source>
</reference>
<reference key="4">
    <citation type="journal article" date="1994" name="J. Biol. Chem.">
        <title>RNA polymerase transcription factor IIH holoenzyme from yeast.</title>
        <authorList>
            <person name="Svejstrup J.Q."/>
            <person name="Feaver W.J."/>
            <person name="LaPointe J."/>
            <person name="Kornberg R.D."/>
        </authorList>
    </citation>
    <scope>FUNCTION OF TFIIH IN RNA POLYMERASE II TRANSCRIPTION</scope>
</reference>
<reference key="5">
    <citation type="journal article" date="1996" name="J. Biol. Chem.">
        <title>Reconstitution of TFIIH and requirement of its DNA helicase subunits, Rad3 and Rad25, in the incision step of nucleotide excision repair.</title>
        <authorList>
            <person name="Sung P."/>
            <person name="Guzder S.N."/>
            <person name="Prakash L."/>
            <person name="Prakash S."/>
        </authorList>
    </citation>
    <scope>FUNCTION OF THE TFIIH CORE COMPLEX IN DNA REPAIR</scope>
</reference>
<reference key="6">
    <citation type="journal article" date="2003" name="J. Biol. Chem.">
        <title>Revised subunit structure of yeast transcription factor IIH (TFIIH) and reconciliation with human TFIIH.</title>
        <authorList>
            <person name="Takagi Y."/>
            <person name="Komori H."/>
            <person name="Chang W.-H."/>
            <person name="Hudmon A."/>
            <person name="Erdjument-Bromage H."/>
            <person name="Tempst P."/>
            <person name="Kornberg R.D."/>
        </authorList>
    </citation>
    <scope>IDENTIFICATION IN THE TFIIH CORE COMPLEX</scope>
</reference>
<reference key="7">
    <citation type="journal article" date="2003" name="Nature">
        <title>Global analysis of protein expression in yeast.</title>
        <authorList>
            <person name="Ghaemmaghami S."/>
            <person name="Huh W.-K."/>
            <person name="Bower K."/>
            <person name="Howson R.W."/>
            <person name="Belle A."/>
            <person name="Dephoure N."/>
            <person name="O'Shea E.K."/>
            <person name="Weissman J.S."/>
        </authorList>
    </citation>
    <scope>LEVEL OF PROTEIN EXPRESSION [LARGE SCALE ANALYSIS]</scope>
</reference>
<reference key="8">
    <citation type="journal article" date="2008" name="Nat. Struct. Mol. Biol.">
        <title>Structural basis for group A trichothiodystrophy.</title>
        <authorList>
            <person name="Kainov D.E."/>
            <person name="Vitorino M."/>
            <person name="Cavarelli J."/>
            <person name="Poterszman A."/>
            <person name="Egly J.M."/>
        </authorList>
    </citation>
    <scope>X-RAY CRYSTALLOGRAPHY (1.80 ANGSTROMS) OF 412-513</scope>
    <scope>INTERACTION WITH TFB5</scope>
</reference>
<reference key="9">
    <citation type="journal article" date="2012" name="Proc. Natl. Acad. Sci. U.S.A.">
        <title>Tfb6, a previously unidentified subunit of the general transcription factor TFIIH, facilitates dissociation of Ssl2 helicase after transcription initiation.</title>
        <authorList>
            <person name="Murakami K."/>
            <person name="Gibbons B.J."/>
            <person name="Davis R.E."/>
            <person name="Nagai S."/>
            <person name="Liu X."/>
            <person name="Robinson P.J."/>
            <person name="Wu T."/>
            <person name="Kaplan C.D."/>
            <person name="Kornberg R.D."/>
        </authorList>
    </citation>
    <scope>IDENTIFICATION BY MASS SPECTROMETRY</scope>
    <scope>SUBUNIT</scope>
</reference>
<reference key="10">
    <citation type="journal article" date="2015" name="Proc. Natl. Acad. Sci. U.S.A.">
        <title>Structure of an RNA polymerase II preinitiation complex.</title>
        <authorList>
            <person name="Murakami K."/>
            <person name="Tsai K.L."/>
            <person name="Kalisman N."/>
            <person name="Bushnell D.A."/>
            <person name="Asturias F.J."/>
            <person name="Kornberg R.D."/>
        </authorList>
    </citation>
    <scope>STRUCTURE BY ELECTRON MICROSCOPY (6.00 ANGSTROMS) OF 447-508</scope>
</reference>
<reference key="11">
    <citation type="journal article" date="2016" name="Cell">
        <title>Structure of a complete mediator-RNA polymerase II pre-initiation complex.</title>
        <authorList>
            <person name="Robinson P.J."/>
            <person name="Trnka M.J."/>
            <person name="Bushnell D.A."/>
            <person name="Davis R.E."/>
            <person name="Mattei P.J."/>
            <person name="Burlingame A.L."/>
            <person name="Kornberg R.D."/>
        </authorList>
    </citation>
    <scope>STRUCTURE BY ELECTRON MICROSCOPY (15.30 ANGSTROMS)</scope>
</reference>
<organism>
    <name type="scientific">Saccharomyces cerevisiae (strain ATCC 204508 / S288c)</name>
    <name type="common">Baker's yeast</name>
    <dbReference type="NCBI Taxonomy" id="559292"/>
    <lineage>
        <taxon>Eukaryota</taxon>
        <taxon>Fungi</taxon>
        <taxon>Dikarya</taxon>
        <taxon>Ascomycota</taxon>
        <taxon>Saccharomycotina</taxon>
        <taxon>Saccharomycetes</taxon>
        <taxon>Saccharomycetales</taxon>
        <taxon>Saccharomycetaceae</taxon>
        <taxon>Saccharomyces</taxon>
    </lineage>
</organism>
<keyword id="KW-0002">3D-structure</keyword>
<keyword id="KW-0903">Direct protein sequencing</keyword>
<keyword id="KW-0227">DNA damage</keyword>
<keyword id="KW-0228">DNA excision</keyword>
<keyword id="KW-0234">DNA repair</keyword>
<keyword id="KW-0539">Nucleus</keyword>
<keyword id="KW-1185">Reference proteome</keyword>
<keyword id="KW-0804">Transcription</keyword>
<keyword id="KW-0805">Transcription regulation</keyword>